<comment type="catalytic activity">
    <reaction evidence="1">
        <text>a plastoquinone + NADH + (n+1) H(+)(in) = a plastoquinol + NAD(+) + n H(+)(out)</text>
        <dbReference type="Rhea" id="RHEA:42608"/>
        <dbReference type="Rhea" id="RHEA-COMP:9561"/>
        <dbReference type="Rhea" id="RHEA-COMP:9562"/>
        <dbReference type="ChEBI" id="CHEBI:15378"/>
        <dbReference type="ChEBI" id="CHEBI:17757"/>
        <dbReference type="ChEBI" id="CHEBI:57540"/>
        <dbReference type="ChEBI" id="CHEBI:57945"/>
        <dbReference type="ChEBI" id="CHEBI:62192"/>
    </reaction>
</comment>
<comment type="catalytic activity">
    <reaction evidence="1">
        <text>a plastoquinone + NADPH + (n+1) H(+)(in) = a plastoquinol + NADP(+) + n H(+)(out)</text>
        <dbReference type="Rhea" id="RHEA:42612"/>
        <dbReference type="Rhea" id="RHEA-COMP:9561"/>
        <dbReference type="Rhea" id="RHEA-COMP:9562"/>
        <dbReference type="ChEBI" id="CHEBI:15378"/>
        <dbReference type="ChEBI" id="CHEBI:17757"/>
        <dbReference type="ChEBI" id="CHEBI:57783"/>
        <dbReference type="ChEBI" id="CHEBI:58349"/>
        <dbReference type="ChEBI" id="CHEBI:62192"/>
    </reaction>
</comment>
<comment type="subcellular location">
    <subcellularLocation>
        <location evidence="1">Plastid</location>
        <location evidence="1">Chloroplast thylakoid membrane</location>
        <topology evidence="1">Multi-pass membrane protein</topology>
    </subcellularLocation>
</comment>
<comment type="similarity">
    <text evidence="1">Belongs to the complex I subunit 4 family.</text>
</comment>
<keyword id="KW-0150">Chloroplast</keyword>
<keyword id="KW-0472">Membrane</keyword>
<keyword id="KW-0520">NAD</keyword>
<keyword id="KW-0521">NADP</keyword>
<keyword id="KW-0934">Plastid</keyword>
<keyword id="KW-0618">Plastoquinone</keyword>
<keyword id="KW-0874">Quinone</keyword>
<keyword id="KW-0793">Thylakoid</keyword>
<keyword id="KW-1278">Translocase</keyword>
<keyword id="KW-0812">Transmembrane</keyword>
<keyword id="KW-1133">Transmembrane helix</keyword>
<proteinExistence type="inferred from homology"/>
<gene>
    <name evidence="1" type="primary">ndhD</name>
</gene>
<sequence>MSSLPWLTIIVLLPICAGLLIPLFPNEGNKIIRWYTLGICIIEFLLITYIFCCHFRINDQSLQLEEDYNWIDLINFHWRLGIDGLSMGLILLTGFVTTLATLAAWPVTRNTRLFHFLMLAMYSGQIGLFASQDILLFFFMWELELIPIYLLLSIWGGKRRLYSATKFILYTAGGSIFLLIGALTIGLYGNNGPLFDIQSLATRSYPIALEIIIYSGFLIAYAVKLPIFPFHTWLPDTHGEAHYSTCMLLAGILLKMGGYGLIRINMELLPHAHAIFAPWMVMFGAVQIVYASLISLNQRNLKRRIAYSSVSHMGFVMIGIGSLTNIGLNGAILQMISHGLTGAALFFLAGTSYDRTRTLFLDQLGGIAISMPKLFTMFSIFSLASLALPGMSGFVAELMVFLGIVISQNYSLTFKIVITIIEAIGIILTPIYLLSMLRQMFYGYKIPNTLALSLIDSGPREIFISLCLLLPIIGIGLYPNLVLSLWNSEVEYILSQY</sequence>
<organism>
    <name type="scientific">Angiopteris evecta</name>
    <name type="common">Mule's foot fern</name>
    <name type="synonym">Polypodium evectum</name>
    <dbReference type="NCBI Taxonomy" id="13825"/>
    <lineage>
        <taxon>Eukaryota</taxon>
        <taxon>Viridiplantae</taxon>
        <taxon>Streptophyta</taxon>
        <taxon>Embryophyta</taxon>
        <taxon>Tracheophyta</taxon>
        <taxon>Polypodiopsida</taxon>
        <taxon>Marattiidae</taxon>
        <taxon>Marattiales</taxon>
        <taxon>Marattiaceae</taxon>
        <taxon>Angiopteris</taxon>
    </lineage>
</organism>
<accession>A2T383</accession>
<geneLocation type="chloroplast"/>
<evidence type="ECO:0000255" key="1">
    <source>
        <dbReference type="HAMAP-Rule" id="MF_00491"/>
    </source>
</evidence>
<feature type="chain" id="PRO_0000343270" description="NAD(P)H-quinone oxidoreductase chain 4, chloroplastic">
    <location>
        <begin position="1"/>
        <end position="497"/>
    </location>
</feature>
<feature type="transmembrane region" description="Helical" evidence="1">
    <location>
        <begin position="4"/>
        <end position="24"/>
    </location>
</feature>
<feature type="transmembrane region" description="Helical" evidence="1">
    <location>
        <begin position="35"/>
        <end position="55"/>
    </location>
</feature>
<feature type="transmembrane region" description="Helical" evidence="1">
    <location>
        <begin position="87"/>
        <end position="107"/>
    </location>
</feature>
<feature type="transmembrane region" description="Helical" evidence="1">
    <location>
        <begin position="113"/>
        <end position="133"/>
    </location>
</feature>
<feature type="transmembrane region" description="Helical" evidence="1">
    <location>
        <begin position="134"/>
        <end position="154"/>
    </location>
</feature>
<feature type="transmembrane region" description="Helical" evidence="1">
    <location>
        <begin position="167"/>
        <end position="187"/>
    </location>
</feature>
<feature type="transmembrane region" description="Helical" evidence="1">
    <location>
        <begin position="207"/>
        <end position="227"/>
    </location>
</feature>
<feature type="transmembrane region" description="Helical" evidence="1">
    <location>
        <begin position="242"/>
        <end position="262"/>
    </location>
</feature>
<feature type="transmembrane region" description="Helical" evidence="1">
    <location>
        <begin position="274"/>
        <end position="294"/>
    </location>
</feature>
<feature type="transmembrane region" description="Helical" evidence="1">
    <location>
        <begin position="313"/>
        <end position="333"/>
    </location>
</feature>
<feature type="transmembrane region" description="Helical" evidence="1">
    <location>
        <begin position="386"/>
        <end position="406"/>
    </location>
</feature>
<feature type="transmembrane region" description="Helical" evidence="1">
    <location>
        <begin position="416"/>
        <end position="436"/>
    </location>
</feature>
<feature type="transmembrane region" description="Helical" evidence="1">
    <location>
        <begin position="462"/>
        <end position="482"/>
    </location>
</feature>
<dbReference type="EC" id="7.1.1.-" evidence="1"/>
<dbReference type="EMBL" id="DQ821119">
    <property type="protein sequence ID" value="ABG79650.1"/>
    <property type="molecule type" value="Genomic_DNA"/>
</dbReference>
<dbReference type="RefSeq" id="YP_001023751.1">
    <property type="nucleotide sequence ID" value="NC_008829.1"/>
</dbReference>
<dbReference type="SMR" id="A2T383"/>
<dbReference type="GeneID" id="4788200"/>
<dbReference type="GO" id="GO:0009535">
    <property type="term" value="C:chloroplast thylakoid membrane"/>
    <property type="evidence" value="ECO:0007669"/>
    <property type="project" value="UniProtKB-SubCell"/>
</dbReference>
<dbReference type="GO" id="GO:0008137">
    <property type="term" value="F:NADH dehydrogenase (ubiquinone) activity"/>
    <property type="evidence" value="ECO:0007669"/>
    <property type="project" value="InterPro"/>
</dbReference>
<dbReference type="GO" id="GO:0048039">
    <property type="term" value="F:ubiquinone binding"/>
    <property type="evidence" value="ECO:0007669"/>
    <property type="project" value="TreeGrafter"/>
</dbReference>
<dbReference type="GO" id="GO:0042773">
    <property type="term" value="P:ATP synthesis coupled electron transport"/>
    <property type="evidence" value="ECO:0007669"/>
    <property type="project" value="InterPro"/>
</dbReference>
<dbReference type="GO" id="GO:0015990">
    <property type="term" value="P:electron transport coupled proton transport"/>
    <property type="evidence" value="ECO:0007669"/>
    <property type="project" value="TreeGrafter"/>
</dbReference>
<dbReference type="HAMAP" id="MF_00491">
    <property type="entry name" value="NDH1_NuoM"/>
    <property type="match status" value="1"/>
</dbReference>
<dbReference type="InterPro" id="IPR022997">
    <property type="entry name" value="NADH_Q_OxRdtase_chain4"/>
</dbReference>
<dbReference type="InterPro" id="IPR010227">
    <property type="entry name" value="NADH_Q_OxRdtase_chainM/4"/>
</dbReference>
<dbReference type="InterPro" id="IPR003918">
    <property type="entry name" value="NADH_UbQ_OxRdtase"/>
</dbReference>
<dbReference type="InterPro" id="IPR001750">
    <property type="entry name" value="ND/Mrp_TM"/>
</dbReference>
<dbReference type="NCBIfam" id="TIGR01972">
    <property type="entry name" value="NDH_I_M"/>
    <property type="match status" value="1"/>
</dbReference>
<dbReference type="NCBIfam" id="NF009212">
    <property type="entry name" value="PRK12561.1"/>
    <property type="match status" value="1"/>
</dbReference>
<dbReference type="PANTHER" id="PTHR43507:SF21">
    <property type="entry name" value="NAD(P)H-QUINONE OXIDOREDUCTASE CHAIN 4, CHLOROPLASTIC"/>
    <property type="match status" value="1"/>
</dbReference>
<dbReference type="PANTHER" id="PTHR43507">
    <property type="entry name" value="NADH-UBIQUINONE OXIDOREDUCTASE CHAIN 4"/>
    <property type="match status" value="1"/>
</dbReference>
<dbReference type="Pfam" id="PF00361">
    <property type="entry name" value="Proton_antipo_M"/>
    <property type="match status" value="1"/>
</dbReference>
<dbReference type="PRINTS" id="PR01437">
    <property type="entry name" value="NUOXDRDTASE4"/>
</dbReference>
<name>NU4C_ANGEV</name>
<reference key="1">
    <citation type="journal article" date="2007" name="Am. Fern J.">
        <title>The complete plastid genome sequence of Angiopteris evecta (G. Forst.) Hoffm. (Marattiaceae).</title>
        <authorList>
            <person name="Roper J.M."/>
            <person name="Hansen S.K."/>
            <person name="Wolf P.G."/>
            <person name="Karol K.G."/>
            <person name="Mandoli D.F."/>
            <person name="Everett K.D.E."/>
            <person name="Kuehl J.V."/>
            <person name="Boore J.L."/>
        </authorList>
    </citation>
    <scope>NUCLEOTIDE SEQUENCE [LARGE SCALE GENOMIC DNA]</scope>
</reference>
<protein>
    <recommendedName>
        <fullName evidence="1">NAD(P)H-quinone oxidoreductase chain 4, chloroplastic</fullName>
        <ecNumber evidence="1">7.1.1.-</ecNumber>
    </recommendedName>
    <alternativeName>
        <fullName evidence="1">NAD(P)H dehydrogenase, chain 4</fullName>
    </alternativeName>
    <alternativeName>
        <fullName evidence="1">NADH-plastoquinone oxidoreductase chain 4</fullName>
    </alternativeName>
</protein>